<feature type="chain" id="PRO_0000226847" description="Large ribosomal subunit protein bL19">
    <location>
        <begin position="1"/>
        <end position="125"/>
    </location>
</feature>
<reference key="1">
    <citation type="journal article" date="2006" name="J. Bacteriol.">
        <title>Comparative genomic analysis of three strains of Ehrlichia ruminantium reveals an active process of genome size plasticity.</title>
        <authorList>
            <person name="Frutos R."/>
            <person name="Viari A."/>
            <person name="Ferraz C."/>
            <person name="Morgat A."/>
            <person name="Eychenie S."/>
            <person name="Kandassamy Y."/>
            <person name="Chantal I."/>
            <person name="Bensaid A."/>
            <person name="Coissac E."/>
            <person name="Vachiery N."/>
            <person name="Demaille J."/>
            <person name="Martinez D."/>
        </authorList>
    </citation>
    <scope>NUCLEOTIDE SEQUENCE [LARGE SCALE GENOMIC DNA]</scope>
    <source>
        <strain>Gardel</strain>
    </source>
</reference>
<dbReference type="EMBL" id="CR925677">
    <property type="protein sequence ID" value="CAI28381.1"/>
    <property type="status" value="ALT_INIT"/>
    <property type="molecule type" value="Genomic_DNA"/>
</dbReference>
<dbReference type="RefSeq" id="WP_044157153.1">
    <property type="nucleotide sequence ID" value="NC_006831.1"/>
</dbReference>
<dbReference type="SMR" id="Q5FGP4"/>
<dbReference type="KEGG" id="erg:ERGA_CDS_09290"/>
<dbReference type="HOGENOM" id="CLU_103507_2_1_5"/>
<dbReference type="Proteomes" id="UP000000533">
    <property type="component" value="Chromosome"/>
</dbReference>
<dbReference type="GO" id="GO:0022625">
    <property type="term" value="C:cytosolic large ribosomal subunit"/>
    <property type="evidence" value="ECO:0007669"/>
    <property type="project" value="TreeGrafter"/>
</dbReference>
<dbReference type="GO" id="GO:0003735">
    <property type="term" value="F:structural constituent of ribosome"/>
    <property type="evidence" value="ECO:0007669"/>
    <property type="project" value="InterPro"/>
</dbReference>
<dbReference type="GO" id="GO:0006412">
    <property type="term" value="P:translation"/>
    <property type="evidence" value="ECO:0007669"/>
    <property type="project" value="UniProtKB-UniRule"/>
</dbReference>
<dbReference type="Gene3D" id="2.30.30.790">
    <property type="match status" value="1"/>
</dbReference>
<dbReference type="HAMAP" id="MF_00402">
    <property type="entry name" value="Ribosomal_bL19"/>
    <property type="match status" value="1"/>
</dbReference>
<dbReference type="InterPro" id="IPR001857">
    <property type="entry name" value="Ribosomal_bL19"/>
</dbReference>
<dbReference type="InterPro" id="IPR038657">
    <property type="entry name" value="Ribosomal_bL19_sf"/>
</dbReference>
<dbReference type="InterPro" id="IPR008991">
    <property type="entry name" value="Translation_prot_SH3-like_sf"/>
</dbReference>
<dbReference type="NCBIfam" id="TIGR01024">
    <property type="entry name" value="rplS_bact"/>
    <property type="match status" value="1"/>
</dbReference>
<dbReference type="PANTHER" id="PTHR15680:SF9">
    <property type="entry name" value="LARGE RIBOSOMAL SUBUNIT PROTEIN BL19M"/>
    <property type="match status" value="1"/>
</dbReference>
<dbReference type="PANTHER" id="PTHR15680">
    <property type="entry name" value="RIBOSOMAL PROTEIN L19"/>
    <property type="match status" value="1"/>
</dbReference>
<dbReference type="Pfam" id="PF01245">
    <property type="entry name" value="Ribosomal_L19"/>
    <property type="match status" value="1"/>
</dbReference>
<dbReference type="PIRSF" id="PIRSF002191">
    <property type="entry name" value="Ribosomal_L19"/>
    <property type="match status" value="1"/>
</dbReference>
<dbReference type="PRINTS" id="PR00061">
    <property type="entry name" value="RIBOSOMALL19"/>
</dbReference>
<dbReference type="SUPFAM" id="SSF50104">
    <property type="entry name" value="Translation proteins SH3-like domain"/>
    <property type="match status" value="1"/>
</dbReference>
<accession>Q5FGP4</accession>
<evidence type="ECO:0000255" key="1">
    <source>
        <dbReference type="HAMAP-Rule" id="MF_00402"/>
    </source>
</evidence>
<evidence type="ECO:0000305" key="2"/>
<sequence>MSNLLKEFNEQQIKLLSNREIPKFKSGDTLRVTMKIFDSAGERIQTFEGVCIKKRNNGLHSSFTLRKISYNESIQLQIFLYSPTIESIEVVKFGKVRRAKLYYMLSLFGKSARIKERIDRSKKSS</sequence>
<gene>
    <name evidence="1" type="primary">rplS</name>
    <name type="ordered locus">ERGA_CDS_09290</name>
</gene>
<comment type="function">
    <text evidence="1">This protein is located at the 30S-50S ribosomal subunit interface and may play a role in the structure and function of the aminoacyl-tRNA binding site.</text>
</comment>
<comment type="similarity">
    <text evidence="1">Belongs to the bacterial ribosomal protein bL19 family.</text>
</comment>
<comment type="sequence caution" evidence="2">
    <conflict type="erroneous initiation">
        <sequence resource="EMBL-CDS" id="CAI28381"/>
    </conflict>
</comment>
<protein>
    <recommendedName>
        <fullName evidence="1">Large ribosomal subunit protein bL19</fullName>
    </recommendedName>
    <alternativeName>
        <fullName evidence="2">50S ribosomal protein L19</fullName>
    </alternativeName>
</protein>
<organism>
    <name type="scientific">Ehrlichia ruminantium (strain Gardel)</name>
    <dbReference type="NCBI Taxonomy" id="302409"/>
    <lineage>
        <taxon>Bacteria</taxon>
        <taxon>Pseudomonadati</taxon>
        <taxon>Pseudomonadota</taxon>
        <taxon>Alphaproteobacteria</taxon>
        <taxon>Rickettsiales</taxon>
        <taxon>Anaplasmataceae</taxon>
        <taxon>Ehrlichia</taxon>
    </lineage>
</organism>
<name>RL19_EHRRG</name>
<keyword id="KW-0687">Ribonucleoprotein</keyword>
<keyword id="KW-0689">Ribosomal protein</keyword>
<proteinExistence type="inferred from homology"/>